<protein>
    <recommendedName>
        <fullName evidence="1">Chitooligosaccharide deacetylase</fullName>
        <shortName evidence="1">COD</shortName>
        <ecNumber evidence="1">3.5.1.105</ecNumber>
    </recommendedName>
    <alternativeName>
        <fullName evidence="1">Chitin disaccharide deacetylase</fullName>
    </alternativeName>
    <alternativeName>
        <fullName evidence="1">Chitobiose deacetylase</fullName>
    </alternativeName>
    <alternativeName>
        <fullName evidence="1">Chitobiose-6P deacetylase</fullName>
    </alternativeName>
    <alternativeName>
        <fullName evidence="1">Chitotriose deacetylase</fullName>
    </alternativeName>
    <alternativeName>
        <fullName evidence="1">Chitotriose-6P deacetylase</fullName>
    </alternativeName>
</protein>
<feature type="chain" id="PRO_1000085763" description="Chitooligosaccharide deacetylase">
    <location>
        <begin position="1"/>
        <end position="252"/>
    </location>
</feature>
<feature type="binding site" evidence="1">
    <location>
        <position position="61"/>
    </location>
    <ligand>
        <name>Mg(2+)</name>
        <dbReference type="ChEBI" id="CHEBI:18420"/>
    </ligand>
</feature>
<feature type="binding site" evidence="1">
    <location>
        <position position="125"/>
    </location>
    <ligand>
        <name>Mg(2+)</name>
        <dbReference type="ChEBI" id="CHEBI:18420"/>
    </ligand>
</feature>
<accession>A9N261</accession>
<sequence>MERVLIVNADDFGLSKGQNYGIVEAYRNGVVTSTTALVNGEAIDHAAQLSRELPALGVGIHFVLTLGKPVSEMPGLTRDGLLGKWIWQMAEEDTLPLDEIAHELACQYQRFIDVFGREPTHLDSHHHVHMFPQIFPIVARFAAQRGIALRIDRQTVLNADDLPSDLRSTQGFSSEFYGEEITEACFLRILDASAHRGEASLEVMCHPAFVDNIIRQSAYCYPRLTELEVLTSASLKAAIAERGYRPGSFLDI</sequence>
<dbReference type="EC" id="3.5.1.105" evidence="1"/>
<dbReference type="EMBL" id="CP000886">
    <property type="protein sequence ID" value="ABX67410.1"/>
    <property type="molecule type" value="Genomic_DNA"/>
</dbReference>
<dbReference type="RefSeq" id="WP_000442723.1">
    <property type="nucleotide sequence ID" value="NC_010102.1"/>
</dbReference>
<dbReference type="SMR" id="A9N261"/>
<dbReference type="KEGG" id="spq:SPAB_02023"/>
<dbReference type="PATRIC" id="fig|1016998.12.peg.1912"/>
<dbReference type="HOGENOM" id="CLU_064244_4_1_6"/>
<dbReference type="BioCyc" id="SENT1016998:SPAB_RS08260-MONOMER"/>
<dbReference type="UniPathway" id="UPA00349"/>
<dbReference type="Proteomes" id="UP000008556">
    <property type="component" value="Chromosome"/>
</dbReference>
<dbReference type="GO" id="GO:0005737">
    <property type="term" value="C:cytoplasm"/>
    <property type="evidence" value="ECO:0007669"/>
    <property type="project" value="UniProtKB-SubCell"/>
</dbReference>
<dbReference type="GO" id="GO:0036311">
    <property type="term" value="F:chitin disaccharide deacetylase activity"/>
    <property type="evidence" value="ECO:0007669"/>
    <property type="project" value="UniProtKB-UniRule"/>
</dbReference>
<dbReference type="GO" id="GO:0019213">
    <property type="term" value="F:deacetylase activity"/>
    <property type="evidence" value="ECO:0007669"/>
    <property type="project" value="TreeGrafter"/>
</dbReference>
<dbReference type="GO" id="GO:0046872">
    <property type="term" value="F:metal ion binding"/>
    <property type="evidence" value="ECO:0007669"/>
    <property type="project" value="UniProtKB-KW"/>
</dbReference>
<dbReference type="GO" id="GO:0006032">
    <property type="term" value="P:chitin catabolic process"/>
    <property type="evidence" value="ECO:0007669"/>
    <property type="project" value="UniProtKB-UniPathway"/>
</dbReference>
<dbReference type="GO" id="GO:0052777">
    <property type="term" value="P:diacetylchitobiose catabolic process"/>
    <property type="evidence" value="ECO:0007669"/>
    <property type="project" value="UniProtKB-UniRule"/>
</dbReference>
<dbReference type="GO" id="GO:0000272">
    <property type="term" value="P:polysaccharide catabolic process"/>
    <property type="evidence" value="ECO:0007669"/>
    <property type="project" value="UniProtKB-UniRule"/>
</dbReference>
<dbReference type="CDD" id="cd10803">
    <property type="entry name" value="YdjC_EF3048_like"/>
    <property type="match status" value="1"/>
</dbReference>
<dbReference type="FunFam" id="3.20.20.370:FF:000001">
    <property type="entry name" value="Chitooligosaccharide deacetylase"/>
    <property type="match status" value="1"/>
</dbReference>
<dbReference type="Gene3D" id="3.20.20.370">
    <property type="entry name" value="Glycoside hydrolase/deacetylase"/>
    <property type="match status" value="1"/>
</dbReference>
<dbReference type="HAMAP" id="MF_01246">
    <property type="entry name" value="COD"/>
    <property type="match status" value="1"/>
</dbReference>
<dbReference type="InterPro" id="IPR022948">
    <property type="entry name" value="COD_ChbG_bac"/>
</dbReference>
<dbReference type="InterPro" id="IPR011330">
    <property type="entry name" value="Glyco_hydro/deAcase_b/a-brl"/>
</dbReference>
<dbReference type="InterPro" id="IPR006879">
    <property type="entry name" value="YdjC-like"/>
</dbReference>
<dbReference type="NCBIfam" id="NF002559">
    <property type="entry name" value="PRK02134.1"/>
    <property type="match status" value="1"/>
</dbReference>
<dbReference type="PANTHER" id="PTHR31609:SF1">
    <property type="entry name" value="CARBOHYDRATE DEACETYLASE"/>
    <property type="match status" value="1"/>
</dbReference>
<dbReference type="PANTHER" id="PTHR31609">
    <property type="entry name" value="YDJC DEACETYLASE FAMILY MEMBER"/>
    <property type="match status" value="1"/>
</dbReference>
<dbReference type="Pfam" id="PF04794">
    <property type="entry name" value="YdjC"/>
    <property type="match status" value="1"/>
</dbReference>
<dbReference type="SUPFAM" id="SSF88713">
    <property type="entry name" value="Glycoside hydrolase/deacetylase"/>
    <property type="match status" value="1"/>
</dbReference>
<evidence type="ECO:0000255" key="1">
    <source>
        <dbReference type="HAMAP-Rule" id="MF_01246"/>
    </source>
</evidence>
<proteinExistence type="inferred from homology"/>
<organism>
    <name type="scientific">Salmonella paratyphi B (strain ATCC BAA-1250 / SPB7)</name>
    <dbReference type="NCBI Taxonomy" id="1016998"/>
    <lineage>
        <taxon>Bacteria</taxon>
        <taxon>Pseudomonadati</taxon>
        <taxon>Pseudomonadota</taxon>
        <taxon>Gammaproteobacteria</taxon>
        <taxon>Enterobacterales</taxon>
        <taxon>Enterobacteriaceae</taxon>
        <taxon>Salmonella</taxon>
    </lineage>
</organism>
<reference key="1">
    <citation type="submission" date="2007-11" db="EMBL/GenBank/DDBJ databases">
        <authorList>
            <consortium name="The Salmonella enterica serovar Paratyphi B Genome Sequencing Project"/>
            <person name="McClelland M."/>
            <person name="Sanderson E.K."/>
            <person name="Porwollik S."/>
            <person name="Spieth J."/>
            <person name="Clifton W.S."/>
            <person name="Fulton R."/>
            <person name="Cordes M."/>
            <person name="Wollam A."/>
            <person name="Shah N."/>
            <person name="Pepin K."/>
            <person name="Bhonagiri V."/>
            <person name="Nash W."/>
            <person name="Johnson M."/>
            <person name="Thiruvilangam P."/>
            <person name="Wilson R."/>
        </authorList>
    </citation>
    <scope>NUCLEOTIDE SEQUENCE [LARGE SCALE GENOMIC DNA]</scope>
    <source>
        <strain>ATCC BAA-1250 / SPB7</strain>
    </source>
</reference>
<comment type="function">
    <text evidence="1">Involved in the degradation of chitin. ChbG is essential for growth on the acetylated chitooligosaccharides chitobiose and chitotriose but is dispensable for growth on cellobiose and chitosan dimer, the deacetylated form of chitobiose. Deacetylation of chitobiose-6-P and chitotriose-6-P is necessary for both the activation of the chb promoter by the regulatory protein ChbR and the hydrolysis of phosphorylated beta-glucosides by the phospho-beta-glucosidase ChbF. Catalyzes the removal of only one acetyl group from chitobiose-6-P to yield monoacetylchitobiose-6-P, the inducer of ChbR and the substrate of ChbF.</text>
</comment>
<comment type="catalytic activity">
    <reaction evidence="1">
        <text>N,N'-diacetylchitobiose + H2O = N-acetyl-beta-D-glucosaminyl-(1-&gt;4)-D-glucosamine + acetate</text>
        <dbReference type="Rhea" id="RHEA:27469"/>
        <dbReference type="ChEBI" id="CHEBI:15377"/>
        <dbReference type="ChEBI" id="CHEBI:28681"/>
        <dbReference type="ChEBI" id="CHEBI:30089"/>
        <dbReference type="ChEBI" id="CHEBI:59910"/>
        <dbReference type="EC" id="3.5.1.105"/>
    </reaction>
</comment>
<comment type="catalytic activity">
    <reaction evidence="1">
        <text>diacetylchitobiose-6'-phosphate + H2O = N'-monoacetylchitobiose-6'-phosphate + acetate</text>
        <dbReference type="Rhea" id="RHEA:35083"/>
        <dbReference type="ChEBI" id="CHEBI:15377"/>
        <dbReference type="ChEBI" id="CHEBI:30089"/>
        <dbReference type="ChEBI" id="CHEBI:64883"/>
        <dbReference type="ChEBI" id="CHEBI:71315"/>
    </reaction>
</comment>
<comment type="cofactor">
    <cofactor evidence="1">
        <name>Mg(2+)</name>
        <dbReference type="ChEBI" id="CHEBI:18420"/>
    </cofactor>
</comment>
<comment type="pathway">
    <text evidence="1">Glycan degradation; chitin degradation.</text>
</comment>
<comment type="subunit">
    <text evidence="1">Homodimer.</text>
</comment>
<comment type="subcellular location">
    <subcellularLocation>
        <location evidence="1">Cytoplasm</location>
    </subcellularLocation>
</comment>
<comment type="similarity">
    <text evidence="1">Belongs to the YdjC deacetylase family. ChbG subfamily.</text>
</comment>
<gene>
    <name evidence="1" type="primary">chbG</name>
    <name type="ordered locus">SPAB_02023</name>
</gene>
<keyword id="KW-0119">Carbohydrate metabolism</keyword>
<keyword id="KW-0146">Chitin degradation</keyword>
<keyword id="KW-0963">Cytoplasm</keyword>
<keyword id="KW-0378">Hydrolase</keyword>
<keyword id="KW-0460">Magnesium</keyword>
<keyword id="KW-0479">Metal-binding</keyword>
<keyword id="KW-0624">Polysaccharide degradation</keyword>
<name>CHBG_SALPB</name>